<protein>
    <recommendedName>
        <fullName evidence="1">Large ribosomal subunit protein bL9</fullName>
    </recommendedName>
    <alternativeName>
        <fullName evidence="2">50S ribosomal protein L9</fullName>
    </alternativeName>
</protein>
<organism>
    <name type="scientific">Synechococcus sp. (strain JA-2-3B'a(2-13))</name>
    <name type="common">Cyanobacteria bacterium Yellowstone B-Prime</name>
    <dbReference type="NCBI Taxonomy" id="321332"/>
    <lineage>
        <taxon>Bacteria</taxon>
        <taxon>Bacillati</taxon>
        <taxon>Cyanobacteriota</taxon>
        <taxon>Cyanophyceae</taxon>
        <taxon>Synechococcales</taxon>
        <taxon>Synechococcaceae</taxon>
        <taxon>Synechococcus</taxon>
    </lineage>
</organism>
<dbReference type="EMBL" id="CP000240">
    <property type="protein sequence ID" value="ABD02057.1"/>
    <property type="molecule type" value="Genomic_DNA"/>
</dbReference>
<dbReference type="SMR" id="Q2JMI4"/>
<dbReference type="STRING" id="321332.CYB_1080"/>
<dbReference type="KEGG" id="cyb:CYB_1080"/>
<dbReference type="eggNOG" id="COG0359">
    <property type="taxonomic scope" value="Bacteria"/>
</dbReference>
<dbReference type="HOGENOM" id="CLU_078938_5_1_3"/>
<dbReference type="Proteomes" id="UP000001938">
    <property type="component" value="Chromosome"/>
</dbReference>
<dbReference type="GO" id="GO:1990904">
    <property type="term" value="C:ribonucleoprotein complex"/>
    <property type="evidence" value="ECO:0007669"/>
    <property type="project" value="UniProtKB-KW"/>
</dbReference>
<dbReference type="GO" id="GO:0005840">
    <property type="term" value="C:ribosome"/>
    <property type="evidence" value="ECO:0007669"/>
    <property type="project" value="UniProtKB-KW"/>
</dbReference>
<dbReference type="GO" id="GO:0019843">
    <property type="term" value="F:rRNA binding"/>
    <property type="evidence" value="ECO:0007669"/>
    <property type="project" value="UniProtKB-UniRule"/>
</dbReference>
<dbReference type="GO" id="GO:0003735">
    <property type="term" value="F:structural constituent of ribosome"/>
    <property type="evidence" value="ECO:0007669"/>
    <property type="project" value="InterPro"/>
</dbReference>
<dbReference type="GO" id="GO:0006412">
    <property type="term" value="P:translation"/>
    <property type="evidence" value="ECO:0007669"/>
    <property type="project" value="UniProtKB-UniRule"/>
</dbReference>
<dbReference type="Gene3D" id="3.10.430.100">
    <property type="entry name" value="Ribosomal protein L9, C-terminal domain"/>
    <property type="match status" value="1"/>
</dbReference>
<dbReference type="Gene3D" id="3.40.5.10">
    <property type="entry name" value="Ribosomal protein L9, N-terminal domain"/>
    <property type="match status" value="1"/>
</dbReference>
<dbReference type="HAMAP" id="MF_00503">
    <property type="entry name" value="Ribosomal_bL9"/>
    <property type="match status" value="1"/>
</dbReference>
<dbReference type="InterPro" id="IPR000244">
    <property type="entry name" value="Ribosomal_bL9"/>
</dbReference>
<dbReference type="InterPro" id="IPR009027">
    <property type="entry name" value="Ribosomal_bL9/RNase_H1_N"/>
</dbReference>
<dbReference type="InterPro" id="IPR020594">
    <property type="entry name" value="Ribosomal_bL9_bac/chp"/>
</dbReference>
<dbReference type="InterPro" id="IPR020069">
    <property type="entry name" value="Ribosomal_bL9_C"/>
</dbReference>
<dbReference type="InterPro" id="IPR036791">
    <property type="entry name" value="Ribosomal_bL9_C_sf"/>
</dbReference>
<dbReference type="InterPro" id="IPR020070">
    <property type="entry name" value="Ribosomal_bL9_N"/>
</dbReference>
<dbReference type="InterPro" id="IPR036935">
    <property type="entry name" value="Ribosomal_bL9_N_sf"/>
</dbReference>
<dbReference type="NCBIfam" id="TIGR00158">
    <property type="entry name" value="L9"/>
    <property type="match status" value="1"/>
</dbReference>
<dbReference type="PANTHER" id="PTHR21368">
    <property type="entry name" value="50S RIBOSOMAL PROTEIN L9"/>
    <property type="match status" value="1"/>
</dbReference>
<dbReference type="Pfam" id="PF03948">
    <property type="entry name" value="Ribosomal_L9_C"/>
    <property type="match status" value="1"/>
</dbReference>
<dbReference type="Pfam" id="PF01281">
    <property type="entry name" value="Ribosomal_L9_N"/>
    <property type="match status" value="1"/>
</dbReference>
<dbReference type="SUPFAM" id="SSF55658">
    <property type="entry name" value="L9 N-domain-like"/>
    <property type="match status" value="1"/>
</dbReference>
<dbReference type="SUPFAM" id="SSF55653">
    <property type="entry name" value="Ribosomal protein L9 C-domain"/>
    <property type="match status" value="1"/>
</dbReference>
<dbReference type="PROSITE" id="PS00651">
    <property type="entry name" value="RIBOSOMAL_L9"/>
    <property type="match status" value="1"/>
</dbReference>
<name>RL9_SYNJB</name>
<keyword id="KW-1185">Reference proteome</keyword>
<keyword id="KW-0687">Ribonucleoprotein</keyword>
<keyword id="KW-0689">Ribosomal protein</keyword>
<keyword id="KW-0694">RNA-binding</keyword>
<keyword id="KW-0699">rRNA-binding</keyword>
<proteinExistence type="inferred from homology"/>
<gene>
    <name evidence="1" type="primary">rplI</name>
    <name evidence="1" type="synonym">rpl9</name>
    <name type="ordered locus">CYB_1080</name>
</gene>
<comment type="function">
    <text evidence="1">Binds to the 23S rRNA.</text>
</comment>
<comment type="similarity">
    <text evidence="1">Belongs to the bacterial ribosomal protein bL9 family.</text>
</comment>
<sequence length="149" mass="16752">MQVVLRQAIPGLGKPGEIVNVKPGYARNYLFPRQMAVRVTPGILKEQQVRLEQEAARKLAERQQAENYKTALETIGRFVIRKKVGEHDLLFGQVTTSDIAEVVLATSGLDIDRRNILLNEEIKKTGVYPVQVKLHPEVTATLRIQVTPE</sequence>
<feature type="chain" id="PRO_0000236603" description="Large ribosomal subunit protein bL9">
    <location>
        <begin position="1"/>
        <end position="149"/>
    </location>
</feature>
<reference key="1">
    <citation type="journal article" date="2007" name="ISME J.">
        <title>Population level functional diversity in a microbial community revealed by comparative genomic and metagenomic analyses.</title>
        <authorList>
            <person name="Bhaya D."/>
            <person name="Grossman A.R."/>
            <person name="Steunou A.-S."/>
            <person name="Khuri N."/>
            <person name="Cohan F.M."/>
            <person name="Hamamura N."/>
            <person name="Melendrez M.C."/>
            <person name="Bateson M.M."/>
            <person name="Ward D.M."/>
            <person name="Heidelberg J.F."/>
        </authorList>
    </citation>
    <scope>NUCLEOTIDE SEQUENCE [LARGE SCALE GENOMIC DNA]</scope>
    <source>
        <strain>JA-2-3B'a(2-13)</strain>
    </source>
</reference>
<accession>Q2JMI4</accession>
<evidence type="ECO:0000255" key="1">
    <source>
        <dbReference type="HAMAP-Rule" id="MF_00503"/>
    </source>
</evidence>
<evidence type="ECO:0000305" key="2"/>